<feature type="chain" id="PRO_1000049363" description="Small ribosomal subunit protein bS16">
    <location>
        <begin position="1"/>
        <end position="90"/>
    </location>
</feature>
<proteinExistence type="inferred from homology"/>
<comment type="similarity">
    <text evidence="1">Belongs to the bacterial ribosomal protein bS16 family.</text>
</comment>
<name>RS16_STRPG</name>
<evidence type="ECO:0000255" key="1">
    <source>
        <dbReference type="HAMAP-Rule" id="MF_00385"/>
    </source>
</evidence>
<evidence type="ECO:0000305" key="2"/>
<organism>
    <name type="scientific">Streptococcus pyogenes serotype M5 (strain Manfredo)</name>
    <dbReference type="NCBI Taxonomy" id="160491"/>
    <lineage>
        <taxon>Bacteria</taxon>
        <taxon>Bacillati</taxon>
        <taxon>Bacillota</taxon>
        <taxon>Bacilli</taxon>
        <taxon>Lactobacillales</taxon>
        <taxon>Streptococcaceae</taxon>
        <taxon>Streptococcus</taxon>
    </lineage>
</organism>
<sequence>MAVKIRLTRMGSKKKPFYRINVADSRAPRDGRFIETVGTYNPLVAENQITIKEDRVLEWLSKGAQPSDTVRNILSKAGVMAKFHDQKFSK</sequence>
<gene>
    <name evidence="1" type="primary">rpsP</name>
    <name type="ordered locus">SpyM51159</name>
</gene>
<dbReference type="EMBL" id="AM295007">
    <property type="protein sequence ID" value="CAM30484.1"/>
    <property type="molecule type" value="Genomic_DNA"/>
</dbReference>
<dbReference type="RefSeq" id="WP_002985074.1">
    <property type="nucleotide sequence ID" value="NC_009332.1"/>
</dbReference>
<dbReference type="SMR" id="A2RF55"/>
<dbReference type="KEGG" id="spf:SpyM51159"/>
<dbReference type="HOGENOM" id="CLU_100590_5_0_9"/>
<dbReference type="GO" id="GO:0005737">
    <property type="term" value="C:cytoplasm"/>
    <property type="evidence" value="ECO:0007669"/>
    <property type="project" value="UniProtKB-ARBA"/>
</dbReference>
<dbReference type="GO" id="GO:0015935">
    <property type="term" value="C:small ribosomal subunit"/>
    <property type="evidence" value="ECO:0007669"/>
    <property type="project" value="TreeGrafter"/>
</dbReference>
<dbReference type="GO" id="GO:0003735">
    <property type="term" value="F:structural constituent of ribosome"/>
    <property type="evidence" value="ECO:0007669"/>
    <property type="project" value="InterPro"/>
</dbReference>
<dbReference type="GO" id="GO:0006412">
    <property type="term" value="P:translation"/>
    <property type="evidence" value="ECO:0007669"/>
    <property type="project" value="UniProtKB-UniRule"/>
</dbReference>
<dbReference type="FunFam" id="3.30.1320.10:FF:000002">
    <property type="entry name" value="30S ribosomal protein S16"/>
    <property type="match status" value="1"/>
</dbReference>
<dbReference type="Gene3D" id="3.30.1320.10">
    <property type="match status" value="1"/>
</dbReference>
<dbReference type="HAMAP" id="MF_00385">
    <property type="entry name" value="Ribosomal_bS16"/>
    <property type="match status" value="1"/>
</dbReference>
<dbReference type="InterPro" id="IPR000307">
    <property type="entry name" value="Ribosomal_bS16"/>
</dbReference>
<dbReference type="InterPro" id="IPR023803">
    <property type="entry name" value="Ribosomal_bS16_dom_sf"/>
</dbReference>
<dbReference type="NCBIfam" id="TIGR00002">
    <property type="entry name" value="S16"/>
    <property type="match status" value="1"/>
</dbReference>
<dbReference type="PANTHER" id="PTHR12919">
    <property type="entry name" value="30S RIBOSOMAL PROTEIN S16"/>
    <property type="match status" value="1"/>
</dbReference>
<dbReference type="PANTHER" id="PTHR12919:SF20">
    <property type="entry name" value="SMALL RIBOSOMAL SUBUNIT PROTEIN BS16M"/>
    <property type="match status" value="1"/>
</dbReference>
<dbReference type="Pfam" id="PF00886">
    <property type="entry name" value="Ribosomal_S16"/>
    <property type="match status" value="1"/>
</dbReference>
<dbReference type="SUPFAM" id="SSF54565">
    <property type="entry name" value="Ribosomal protein S16"/>
    <property type="match status" value="1"/>
</dbReference>
<accession>A2RF55</accession>
<keyword id="KW-0687">Ribonucleoprotein</keyword>
<keyword id="KW-0689">Ribosomal protein</keyword>
<reference key="1">
    <citation type="journal article" date="2007" name="J. Bacteriol.">
        <title>Complete genome of acute rheumatic fever-associated serotype M5 Streptococcus pyogenes strain Manfredo.</title>
        <authorList>
            <person name="Holden M.T.G."/>
            <person name="Scott A."/>
            <person name="Cherevach I."/>
            <person name="Chillingworth T."/>
            <person name="Churcher C."/>
            <person name="Cronin A."/>
            <person name="Dowd L."/>
            <person name="Feltwell T."/>
            <person name="Hamlin N."/>
            <person name="Holroyd S."/>
            <person name="Jagels K."/>
            <person name="Moule S."/>
            <person name="Mungall K."/>
            <person name="Quail M.A."/>
            <person name="Price C."/>
            <person name="Rabbinowitsch E."/>
            <person name="Sharp S."/>
            <person name="Skelton J."/>
            <person name="Whitehead S."/>
            <person name="Barrell B.G."/>
            <person name="Kehoe M."/>
            <person name="Parkhill J."/>
        </authorList>
    </citation>
    <scope>NUCLEOTIDE SEQUENCE [LARGE SCALE GENOMIC DNA]</scope>
    <source>
        <strain>Manfredo</strain>
    </source>
</reference>
<protein>
    <recommendedName>
        <fullName evidence="1">Small ribosomal subunit protein bS16</fullName>
    </recommendedName>
    <alternativeName>
        <fullName evidence="2">30S ribosomal protein S16</fullName>
    </alternativeName>
</protein>